<feature type="chain" id="PRO_0000319331" description="Probable glucomannan 4-beta-mannosyltransferase 10">
    <location>
        <begin position="1"/>
        <end position="552"/>
    </location>
</feature>
<feature type="transmembrane region" description="Helical" evidence="2">
    <location>
        <begin position="62"/>
        <end position="82"/>
    </location>
</feature>
<feature type="transmembrane region" description="Helical" evidence="2">
    <location>
        <begin position="393"/>
        <end position="413"/>
    </location>
</feature>
<feature type="transmembrane region" description="Helical" evidence="2">
    <location>
        <begin position="430"/>
        <end position="450"/>
    </location>
</feature>
<feature type="transmembrane region" description="Helical" evidence="2">
    <location>
        <begin position="509"/>
        <end position="529"/>
    </location>
</feature>
<feature type="transmembrane region" description="Helical" evidence="2">
    <location>
        <begin position="530"/>
        <end position="550"/>
    </location>
</feature>
<feature type="active site" evidence="2">
    <location>
        <position position="161"/>
    </location>
</feature>
<feature type="active site" evidence="2">
    <location>
        <position position="314"/>
    </location>
</feature>
<feature type="binding site" evidence="2">
    <location>
        <position position="220"/>
    </location>
    <ligand>
        <name>substrate</name>
    </ligand>
</feature>
<feature type="binding site" evidence="2">
    <location>
        <position position="222"/>
    </location>
    <ligand>
        <name>substrate</name>
    </ligand>
</feature>
<feature type="sequence conflict" description="In Ref. 3; BAC43295." evidence="4" ref="3">
    <original>L</original>
    <variation>F</variation>
    <location>
        <position position="468"/>
    </location>
</feature>
<accession>Q9LR87</accession>
<accession>Q8GWQ3</accession>
<proteinExistence type="evidence at transcript level"/>
<name>CSLAA_ARATH</name>
<comment type="function">
    <text evidence="1">Probable mannan synthase which consists of a 4-beta-mannosyltransferase activity on mannan using GDP-mannose. The beta-1,4-mannan product is the backbone for galactomannan synthesis by galactomannan galactosyltransferase. Galactomannan is a noncellulosic polysaccharides of plant cell wall.</text>
</comment>
<comment type="catalytic activity">
    <reaction evidence="1">
        <text>GDP-mannose + (glucomannan)n = GDP + (glucomannan)n+1.</text>
        <dbReference type="EC" id="2.4.1.32"/>
    </reaction>
</comment>
<comment type="subcellular location">
    <subcellularLocation>
        <location evidence="4">Golgi apparatus membrane</location>
        <topology evidence="4">Multi-pass membrane protein</topology>
    </subcellularLocation>
</comment>
<comment type="similarity">
    <text evidence="4">Belongs to the glycosyltransferase 2 family. Plant cellulose synthase-like A subfamily.</text>
</comment>
<comment type="sequence caution" evidence="4">
    <conflict type="erroneous gene model prediction">
        <sequence resource="EMBL-CDS" id="AAF87149"/>
    </conflict>
</comment>
<comment type="sequence caution" evidence="4">
    <conflict type="erroneous initiation">
        <sequence resource="EMBL-CDS" id="BAC43295"/>
    </conflict>
    <text>Truncated N-terminus.</text>
</comment>
<sequence length="552" mass="64155">MTTFLKSLIFLQDSCLAFLSLMFHRGSSEDAAEALKKLETSINGARISFDTTWTREFRSLFIVPLFKCLVAFCLIISLLVFIEGIYMNLVVLYVKVFERKPEKVYRWEAMQEDIELGHETYPMVLVQIPMYNEKEVLQLSIGAACRLIWPLDRLIVQVLDDSTDQTIKELVNTECAKWESKGVNIKCERRDNRNGYKAGALKEGMKHNYVKLCNYVVIFDADFQPEPDYLQHSVPFLVHNPEVALVQARWRFMNANKCLMTRMQEMSLNYHFMAEQESGSTRHAFFSFNGTAGVWRMAAMEEAGGWHDRTTVEDMDLAVRAGLLGWKFVFLNDLTVKSELPSKFKAFRFQQHRWSCGPANLFRKMIMEIIRNKRVTIWKKLYLVYSFFFLRKIIVHCFTFIFYCVILPTSVFFPEVNIPAWSTFYIPSMITLCIVIATPRSFYLVIFWILFENVMSMHRTKGTFIGILERQRVNEWVVTEKLGDALKTKLLPRIGKPSNMFLERVNSKEIMVGIYILCCACYGLFFGNTLLYLYLFMQAVAFLISGVGFVGT</sequence>
<evidence type="ECO:0000250" key="1">
    <source>
        <dbReference type="UniProtKB" id="Q9LZR3"/>
    </source>
</evidence>
<evidence type="ECO:0000255" key="2"/>
<evidence type="ECO:0000303" key="3">
    <source>
    </source>
</evidence>
<evidence type="ECO:0000305" key="4"/>
<dbReference type="EC" id="2.4.1.32" evidence="1"/>
<dbReference type="EMBL" id="AC002423">
    <property type="protein sequence ID" value="AAF87149.1"/>
    <property type="status" value="ALT_SEQ"/>
    <property type="molecule type" value="Genomic_DNA"/>
</dbReference>
<dbReference type="EMBL" id="CP002684">
    <property type="protein sequence ID" value="AEE30475.1"/>
    <property type="molecule type" value="Genomic_DNA"/>
</dbReference>
<dbReference type="EMBL" id="AK118701">
    <property type="protein sequence ID" value="BAC43295.1"/>
    <property type="status" value="ALT_INIT"/>
    <property type="molecule type" value="mRNA"/>
</dbReference>
<dbReference type="RefSeq" id="NP_173818.1">
    <property type="nucleotide sequence ID" value="NM_102254.3"/>
</dbReference>
<dbReference type="FunCoup" id="Q9LR87">
    <property type="interactions" value="18"/>
</dbReference>
<dbReference type="STRING" id="3702.Q9LR87"/>
<dbReference type="CAZy" id="GT2">
    <property type="family name" value="Glycosyltransferase Family 2"/>
</dbReference>
<dbReference type="PaxDb" id="3702-AT1G24070.1"/>
<dbReference type="ProteomicsDB" id="220355"/>
<dbReference type="EnsemblPlants" id="AT1G24070.1">
    <property type="protein sequence ID" value="AT1G24070.1"/>
    <property type="gene ID" value="AT1G24070"/>
</dbReference>
<dbReference type="GeneID" id="839019"/>
<dbReference type="Gramene" id="AT1G24070.1">
    <property type="protein sequence ID" value="AT1G24070.1"/>
    <property type="gene ID" value="AT1G24070"/>
</dbReference>
<dbReference type="KEGG" id="ath:AT1G24070"/>
<dbReference type="Araport" id="AT1G24070"/>
<dbReference type="TAIR" id="AT1G24070">
    <property type="gene designation" value="CSLA10"/>
</dbReference>
<dbReference type="eggNOG" id="ENOG502QR7J">
    <property type="taxonomic scope" value="Eukaryota"/>
</dbReference>
<dbReference type="HOGENOM" id="CLU_012856_2_0_1"/>
<dbReference type="InParanoid" id="Q9LR87"/>
<dbReference type="OMA" id="PAWSTFY"/>
<dbReference type="PhylomeDB" id="Q9LR87"/>
<dbReference type="BioCyc" id="ARA:AT1G24070-MONOMER"/>
<dbReference type="PRO" id="PR:Q9LR87"/>
<dbReference type="Proteomes" id="UP000006548">
    <property type="component" value="Chromosome 1"/>
</dbReference>
<dbReference type="ExpressionAtlas" id="Q9LR87">
    <property type="expression patterns" value="baseline and differential"/>
</dbReference>
<dbReference type="GO" id="GO:0000139">
    <property type="term" value="C:Golgi membrane"/>
    <property type="evidence" value="ECO:0007669"/>
    <property type="project" value="UniProtKB-SubCell"/>
</dbReference>
<dbReference type="GO" id="GO:0047259">
    <property type="term" value="F:glucomannan 4-beta-mannosyltransferase activity"/>
    <property type="evidence" value="ECO:0007669"/>
    <property type="project" value="UniProtKB-EC"/>
</dbReference>
<dbReference type="GO" id="GO:0071555">
    <property type="term" value="P:cell wall organization"/>
    <property type="evidence" value="ECO:0007669"/>
    <property type="project" value="UniProtKB-KW"/>
</dbReference>
<dbReference type="CDD" id="cd06437">
    <property type="entry name" value="CESA_CaSu_A2"/>
    <property type="match status" value="1"/>
</dbReference>
<dbReference type="FunFam" id="3.90.550.10:FF:000015">
    <property type="entry name" value="Glucomannan 4-beta-mannosyltransferase 9"/>
    <property type="match status" value="1"/>
</dbReference>
<dbReference type="Gene3D" id="3.90.550.10">
    <property type="entry name" value="Spore Coat Polysaccharide Biosynthesis Protein SpsA, Chain A"/>
    <property type="match status" value="1"/>
</dbReference>
<dbReference type="InterPro" id="IPR001173">
    <property type="entry name" value="Glyco_trans_2-like"/>
</dbReference>
<dbReference type="InterPro" id="IPR029044">
    <property type="entry name" value="Nucleotide-diphossugar_trans"/>
</dbReference>
<dbReference type="PANTHER" id="PTHR32044:SF65">
    <property type="entry name" value="GLUCOMANNAN 4-BETA-MANNOSYLTRANSFERASE 10-RELATED"/>
    <property type="match status" value="1"/>
</dbReference>
<dbReference type="PANTHER" id="PTHR32044">
    <property type="entry name" value="GLUCOMANNAN 4-BETA-MANNOSYLTRANSFERASE 9"/>
    <property type="match status" value="1"/>
</dbReference>
<dbReference type="Pfam" id="PF13632">
    <property type="entry name" value="Glyco_trans_2_3"/>
    <property type="match status" value="1"/>
</dbReference>
<dbReference type="SUPFAM" id="SSF53448">
    <property type="entry name" value="Nucleotide-diphospho-sugar transferases"/>
    <property type="match status" value="1"/>
</dbReference>
<reference key="1">
    <citation type="journal article" date="2000" name="Nature">
        <title>Sequence and analysis of chromosome 1 of the plant Arabidopsis thaliana.</title>
        <authorList>
            <person name="Theologis A."/>
            <person name="Ecker J.R."/>
            <person name="Palm C.J."/>
            <person name="Federspiel N.A."/>
            <person name="Kaul S."/>
            <person name="White O."/>
            <person name="Alonso J."/>
            <person name="Altafi H."/>
            <person name="Araujo R."/>
            <person name="Bowman C.L."/>
            <person name="Brooks S.Y."/>
            <person name="Buehler E."/>
            <person name="Chan A."/>
            <person name="Chao Q."/>
            <person name="Chen H."/>
            <person name="Cheuk R.F."/>
            <person name="Chin C.W."/>
            <person name="Chung M.K."/>
            <person name="Conn L."/>
            <person name="Conway A.B."/>
            <person name="Conway A.R."/>
            <person name="Creasy T.H."/>
            <person name="Dewar K."/>
            <person name="Dunn P."/>
            <person name="Etgu P."/>
            <person name="Feldblyum T.V."/>
            <person name="Feng J.-D."/>
            <person name="Fong B."/>
            <person name="Fujii C.Y."/>
            <person name="Gill J.E."/>
            <person name="Goldsmith A.D."/>
            <person name="Haas B."/>
            <person name="Hansen N.F."/>
            <person name="Hughes B."/>
            <person name="Huizar L."/>
            <person name="Hunter J.L."/>
            <person name="Jenkins J."/>
            <person name="Johnson-Hopson C."/>
            <person name="Khan S."/>
            <person name="Khaykin E."/>
            <person name="Kim C.J."/>
            <person name="Koo H.L."/>
            <person name="Kremenetskaia I."/>
            <person name="Kurtz D.B."/>
            <person name="Kwan A."/>
            <person name="Lam B."/>
            <person name="Langin-Hooper S."/>
            <person name="Lee A."/>
            <person name="Lee J.M."/>
            <person name="Lenz C.A."/>
            <person name="Li J.H."/>
            <person name="Li Y.-P."/>
            <person name="Lin X."/>
            <person name="Liu S.X."/>
            <person name="Liu Z.A."/>
            <person name="Luros J.S."/>
            <person name="Maiti R."/>
            <person name="Marziali A."/>
            <person name="Militscher J."/>
            <person name="Miranda M."/>
            <person name="Nguyen M."/>
            <person name="Nierman W.C."/>
            <person name="Osborne B.I."/>
            <person name="Pai G."/>
            <person name="Peterson J."/>
            <person name="Pham P.K."/>
            <person name="Rizzo M."/>
            <person name="Rooney T."/>
            <person name="Rowley D."/>
            <person name="Sakano H."/>
            <person name="Salzberg S.L."/>
            <person name="Schwartz J.R."/>
            <person name="Shinn P."/>
            <person name="Southwick A.M."/>
            <person name="Sun H."/>
            <person name="Tallon L.J."/>
            <person name="Tambunga G."/>
            <person name="Toriumi M.J."/>
            <person name="Town C.D."/>
            <person name="Utterback T."/>
            <person name="Van Aken S."/>
            <person name="Vaysberg M."/>
            <person name="Vysotskaia V.S."/>
            <person name="Walker M."/>
            <person name="Wu D."/>
            <person name="Yu G."/>
            <person name="Fraser C.M."/>
            <person name="Venter J.C."/>
            <person name="Davis R.W."/>
        </authorList>
    </citation>
    <scope>NUCLEOTIDE SEQUENCE [LARGE SCALE GENOMIC DNA]</scope>
    <source>
        <strain>cv. Columbia</strain>
    </source>
</reference>
<reference key="2">
    <citation type="journal article" date="2017" name="Plant J.">
        <title>Araport11: a complete reannotation of the Arabidopsis thaliana reference genome.</title>
        <authorList>
            <person name="Cheng C.Y."/>
            <person name="Krishnakumar V."/>
            <person name="Chan A.P."/>
            <person name="Thibaud-Nissen F."/>
            <person name="Schobel S."/>
            <person name="Town C.D."/>
        </authorList>
    </citation>
    <scope>GENOME REANNOTATION</scope>
    <source>
        <strain>cv. Columbia</strain>
    </source>
</reference>
<reference key="3">
    <citation type="journal article" date="2002" name="Science">
        <title>Functional annotation of a full-length Arabidopsis cDNA collection.</title>
        <authorList>
            <person name="Seki M."/>
            <person name="Narusaka M."/>
            <person name="Kamiya A."/>
            <person name="Ishida J."/>
            <person name="Satou M."/>
            <person name="Sakurai T."/>
            <person name="Nakajima M."/>
            <person name="Enju A."/>
            <person name="Akiyama K."/>
            <person name="Oono Y."/>
            <person name="Muramatsu M."/>
            <person name="Hayashizaki Y."/>
            <person name="Kawai J."/>
            <person name="Carninci P."/>
            <person name="Itoh M."/>
            <person name="Ishii Y."/>
            <person name="Arakawa T."/>
            <person name="Shibata K."/>
            <person name="Shinagawa A."/>
            <person name="Shinozaki K."/>
        </authorList>
    </citation>
    <scope>NUCLEOTIDE SEQUENCE [LARGE SCALE MRNA] OF 152-552</scope>
    <source>
        <strain>cv. Columbia</strain>
    </source>
</reference>
<reference key="4">
    <citation type="journal article" date="2000" name="Plant Physiol.">
        <title>The cellulose synthase superfamily.</title>
        <authorList>
            <person name="Richmond T.A."/>
            <person name="Somerville C.R."/>
        </authorList>
    </citation>
    <scope>GENE FAMILY</scope>
    <scope>NOMENCLATURE</scope>
</reference>
<organism>
    <name type="scientific">Arabidopsis thaliana</name>
    <name type="common">Mouse-ear cress</name>
    <dbReference type="NCBI Taxonomy" id="3702"/>
    <lineage>
        <taxon>Eukaryota</taxon>
        <taxon>Viridiplantae</taxon>
        <taxon>Streptophyta</taxon>
        <taxon>Embryophyta</taxon>
        <taxon>Tracheophyta</taxon>
        <taxon>Spermatophyta</taxon>
        <taxon>Magnoliopsida</taxon>
        <taxon>eudicotyledons</taxon>
        <taxon>Gunneridae</taxon>
        <taxon>Pentapetalae</taxon>
        <taxon>rosids</taxon>
        <taxon>malvids</taxon>
        <taxon>Brassicales</taxon>
        <taxon>Brassicaceae</taxon>
        <taxon>Camelineae</taxon>
        <taxon>Arabidopsis</taxon>
    </lineage>
</organism>
<protein>
    <recommendedName>
        <fullName evidence="4">Probable glucomannan 4-beta-mannosyltransferase 10</fullName>
        <ecNumber evidence="1">2.4.1.32</ecNumber>
    </recommendedName>
    <alternativeName>
        <fullName evidence="3">Cellulose synthase-like protein A10</fullName>
        <shortName evidence="3">AtCslA10</shortName>
    </alternativeName>
    <alternativeName>
        <fullName evidence="4">Glucomannan synthase</fullName>
    </alternativeName>
    <alternativeName>
        <fullName evidence="4">Mannan synthase 10</fullName>
    </alternativeName>
</protein>
<keyword id="KW-0961">Cell wall biogenesis/degradation</keyword>
<keyword id="KW-0328">Glycosyltransferase</keyword>
<keyword id="KW-0333">Golgi apparatus</keyword>
<keyword id="KW-0472">Membrane</keyword>
<keyword id="KW-1185">Reference proteome</keyword>
<keyword id="KW-0808">Transferase</keyword>
<keyword id="KW-0812">Transmembrane</keyword>
<keyword id="KW-1133">Transmembrane helix</keyword>
<gene>
    <name evidence="3" type="primary">CSLA10</name>
    <name type="ordered locus">At1g24070</name>
    <name type="ORF">T23E23.23</name>
</gene>